<name>UBIE_RUBGI</name>
<organism>
    <name type="scientific">Rubrivivax gelatinosus (strain NBRC 100245 / IL144)</name>
    <dbReference type="NCBI Taxonomy" id="983917"/>
    <lineage>
        <taxon>Bacteria</taxon>
        <taxon>Pseudomonadati</taxon>
        <taxon>Pseudomonadota</taxon>
        <taxon>Betaproteobacteria</taxon>
        <taxon>Burkholderiales</taxon>
        <taxon>Sphaerotilaceae</taxon>
        <taxon>Rubrivivax</taxon>
    </lineage>
</organism>
<keyword id="KW-0474">Menaquinone biosynthesis</keyword>
<keyword id="KW-0489">Methyltransferase</keyword>
<keyword id="KW-1185">Reference proteome</keyword>
<keyword id="KW-0949">S-adenosyl-L-methionine</keyword>
<keyword id="KW-0808">Transferase</keyword>
<keyword id="KW-0831">Ubiquinone biosynthesis</keyword>
<sequence length="251" mass="27792">MNEPTPLSRSFGYQSVDEREREQRIRRVFSAVAARYDLMNDLMSFGIHRLWKRRFVRMAAPQAGQHIVDLAGGTGDVAALMAAADRRVTVVDPSAEMMAVGQARGHAHVDWQVGSAEQLPLADASVDTLTISFGIRNATRIDVALREIHRVLKPGGRFLCLEFSTPAWWLRPFYNLFSFTVIPRLGAWIANSPEAYTYLVESIRRFPDQRGFAAMISAAGFESVRWHDLSFGIACVHVGTRAAAATPAGTA</sequence>
<gene>
    <name evidence="1" type="primary">ubiE</name>
    <name type="ordered locus">RGE_33790</name>
</gene>
<evidence type="ECO:0000255" key="1">
    <source>
        <dbReference type="HAMAP-Rule" id="MF_01813"/>
    </source>
</evidence>
<evidence type="ECO:0000305" key="2"/>
<accession>Q9JPD1</accession>
<accession>I0HUN1</accession>
<feature type="chain" id="PRO_0000193318" description="Ubiquinone/menaquinone biosynthesis C-methyltransferase UbiE">
    <location>
        <begin position="1"/>
        <end position="251"/>
    </location>
</feature>
<feature type="binding site" evidence="1">
    <location>
        <position position="74"/>
    </location>
    <ligand>
        <name>S-adenosyl-L-methionine</name>
        <dbReference type="ChEBI" id="CHEBI:59789"/>
    </ligand>
</feature>
<feature type="binding site" evidence="1">
    <location>
        <position position="92"/>
    </location>
    <ligand>
        <name>S-adenosyl-L-methionine</name>
        <dbReference type="ChEBI" id="CHEBI:59789"/>
    </ligand>
</feature>
<feature type="binding site" evidence="1">
    <location>
        <position position="132"/>
    </location>
    <ligand>
        <name>S-adenosyl-L-methionine</name>
        <dbReference type="ChEBI" id="CHEBI:59789"/>
    </ligand>
</feature>
<reference key="1">
    <citation type="journal article" date="2001" name="J. Mol. Evol.">
        <title>Horizontal transfer of the photosynthesis gene cluster and operon rearrangement in purple bacteria.</title>
        <authorList>
            <person name="Igarashi N."/>
            <person name="Harada J."/>
            <person name="Nagashima S."/>
            <person name="Matsuura K."/>
            <person name="Shimada K."/>
            <person name="Nagashima K.V.P."/>
        </authorList>
    </citation>
    <scope>NUCLEOTIDE SEQUENCE [GENOMIC DNA]</scope>
    <source>
        <strain>NBRC 100245 / IL144</strain>
    </source>
</reference>
<reference key="2">
    <citation type="journal article" date="2012" name="J. Bacteriol.">
        <title>Complete genome sequence of phototrophic betaproteobacterium Rubrivivax gelatinosus IL144.</title>
        <authorList>
            <person name="Nagashima S."/>
            <person name="Kamimura A."/>
            <person name="Shimizu T."/>
            <person name="Nakamura-Isaki S."/>
            <person name="Aono E."/>
            <person name="Sakamoto K."/>
            <person name="Ichikawa N."/>
            <person name="Nakazawa H."/>
            <person name="Sekine M."/>
            <person name="Yamazaki S."/>
            <person name="Fujita N."/>
            <person name="Shimada K."/>
            <person name="Hanada S."/>
            <person name="Nagashima K.V."/>
        </authorList>
    </citation>
    <scope>NUCLEOTIDE SEQUENCE [LARGE SCALE GENOMIC DNA]</scope>
    <source>
        <strain>NBRC 100245 / IL144</strain>
    </source>
</reference>
<proteinExistence type="inferred from homology"/>
<comment type="function">
    <text evidence="1">Methyltransferase required for the conversion of demethylmenaquinol (DMKH2) to menaquinol (MKH2) and the conversion of 2-polyprenyl-6-methoxy-1,4-benzoquinol (DDMQH2) to 2-polyprenyl-3-methyl-6-methoxy-1,4-benzoquinol (DMQH2).</text>
</comment>
<comment type="catalytic activity">
    <reaction evidence="1">
        <text>a 2-demethylmenaquinol + S-adenosyl-L-methionine = a menaquinol + S-adenosyl-L-homocysteine + H(+)</text>
        <dbReference type="Rhea" id="RHEA:42640"/>
        <dbReference type="Rhea" id="RHEA-COMP:9539"/>
        <dbReference type="Rhea" id="RHEA-COMP:9563"/>
        <dbReference type="ChEBI" id="CHEBI:15378"/>
        <dbReference type="ChEBI" id="CHEBI:18151"/>
        <dbReference type="ChEBI" id="CHEBI:55437"/>
        <dbReference type="ChEBI" id="CHEBI:57856"/>
        <dbReference type="ChEBI" id="CHEBI:59789"/>
        <dbReference type="EC" id="2.1.1.163"/>
    </reaction>
</comment>
<comment type="catalytic activity">
    <reaction evidence="1">
        <text>a 2-methoxy-6-(all-trans-polyprenyl)benzene-1,4-diol + S-adenosyl-L-methionine = a 5-methoxy-2-methyl-3-(all-trans-polyprenyl)benzene-1,4-diol + S-adenosyl-L-homocysteine + H(+)</text>
        <dbReference type="Rhea" id="RHEA:28286"/>
        <dbReference type="Rhea" id="RHEA-COMP:10858"/>
        <dbReference type="Rhea" id="RHEA-COMP:10859"/>
        <dbReference type="ChEBI" id="CHEBI:15378"/>
        <dbReference type="ChEBI" id="CHEBI:57856"/>
        <dbReference type="ChEBI" id="CHEBI:59789"/>
        <dbReference type="ChEBI" id="CHEBI:84166"/>
        <dbReference type="ChEBI" id="CHEBI:84167"/>
        <dbReference type="EC" id="2.1.1.201"/>
    </reaction>
</comment>
<comment type="pathway">
    <text evidence="1">Quinol/quinone metabolism; menaquinone biosynthesis; menaquinol from 1,4-dihydroxy-2-naphthoate: step 2/2.</text>
</comment>
<comment type="pathway">
    <text evidence="1">Cofactor biosynthesis; ubiquinone biosynthesis.</text>
</comment>
<comment type="similarity">
    <text evidence="1">Belongs to the class I-like SAM-binding methyltransferase superfamily. MenG/UbiE family.</text>
</comment>
<comment type="sequence caution" evidence="2">
    <conflict type="erroneous initiation">
        <sequence resource="EMBL-CDS" id="BAA94025"/>
    </conflict>
    <text>Extended N-terminus.</text>
</comment>
<dbReference type="EC" id="2.1.1.163" evidence="1"/>
<dbReference type="EC" id="2.1.1.201" evidence="1"/>
<dbReference type="EMBL" id="AB034704">
    <property type="protein sequence ID" value="BAA94025.1"/>
    <property type="status" value="ALT_INIT"/>
    <property type="molecule type" value="Genomic_DNA"/>
</dbReference>
<dbReference type="EMBL" id="AP012320">
    <property type="protein sequence ID" value="BAL96718.1"/>
    <property type="molecule type" value="Genomic_DNA"/>
</dbReference>
<dbReference type="PIR" id="T50872">
    <property type="entry name" value="T50872"/>
</dbReference>
<dbReference type="RefSeq" id="WP_014429578.1">
    <property type="nucleotide sequence ID" value="NC_017075.1"/>
</dbReference>
<dbReference type="SMR" id="Q9JPD1"/>
<dbReference type="STRING" id="983917.RGE_33790"/>
<dbReference type="KEGG" id="rge:RGE_33790"/>
<dbReference type="PATRIC" id="fig|983917.3.peg.3304"/>
<dbReference type="eggNOG" id="COG2226">
    <property type="taxonomic scope" value="Bacteria"/>
</dbReference>
<dbReference type="HOGENOM" id="CLU_037990_0_1_4"/>
<dbReference type="UniPathway" id="UPA00079">
    <property type="reaction ID" value="UER00169"/>
</dbReference>
<dbReference type="UniPathway" id="UPA00232"/>
<dbReference type="Proteomes" id="UP000007883">
    <property type="component" value="Chromosome"/>
</dbReference>
<dbReference type="GO" id="GO:0008425">
    <property type="term" value="F:2-methoxy-6-polyprenyl-1,4-benzoquinol methyltransferase activity"/>
    <property type="evidence" value="ECO:0007669"/>
    <property type="project" value="UniProtKB-UniRule"/>
</dbReference>
<dbReference type="GO" id="GO:0043770">
    <property type="term" value="F:demethylmenaquinone methyltransferase activity"/>
    <property type="evidence" value="ECO:0007669"/>
    <property type="project" value="UniProtKB-UniRule"/>
</dbReference>
<dbReference type="GO" id="GO:0009060">
    <property type="term" value="P:aerobic respiration"/>
    <property type="evidence" value="ECO:0007669"/>
    <property type="project" value="UniProtKB-UniRule"/>
</dbReference>
<dbReference type="GO" id="GO:0009234">
    <property type="term" value="P:menaquinone biosynthetic process"/>
    <property type="evidence" value="ECO:0007669"/>
    <property type="project" value="UniProtKB-UniRule"/>
</dbReference>
<dbReference type="GO" id="GO:0032259">
    <property type="term" value="P:methylation"/>
    <property type="evidence" value="ECO:0007669"/>
    <property type="project" value="UniProtKB-KW"/>
</dbReference>
<dbReference type="CDD" id="cd02440">
    <property type="entry name" value="AdoMet_MTases"/>
    <property type="match status" value="1"/>
</dbReference>
<dbReference type="Gene3D" id="3.40.50.150">
    <property type="entry name" value="Vaccinia Virus protein VP39"/>
    <property type="match status" value="1"/>
</dbReference>
<dbReference type="HAMAP" id="MF_01813">
    <property type="entry name" value="MenG_UbiE_methyltr"/>
    <property type="match status" value="1"/>
</dbReference>
<dbReference type="InterPro" id="IPR029063">
    <property type="entry name" value="SAM-dependent_MTases_sf"/>
</dbReference>
<dbReference type="InterPro" id="IPR004033">
    <property type="entry name" value="UbiE/COQ5_MeTrFase"/>
</dbReference>
<dbReference type="InterPro" id="IPR023576">
    <property type="entry name" value="UbiE/COQ5_MeTrFase_CS"/>
</dbReference>
<dbReference type="NCBIfam" id="TIGR01934">
    <property type="entry name" value="MenG_MenH_UbiE"/>
    <property type="match status" value="1"/>
</dbReference>
<dbReference type="NCBIfam" id="NF001244">
    <property type="entry name" value="PRK00216.1-5"/>
    <property type="match status" value="1"/>
</dbReference>
<dbReference type="PANTHER" id="PTHR43591:SF24">
    <property type="entry name" value="2-METHOXY-6-POLYPRENYL-1,4-BENZOQUINOL METHYLASE, MITOCHONDRIAL"/>
    <property type="match status" value="1"/>
</dbReference>
<dbReference type="PANTHER" id="PTHR43591">
    <property type="entry name" value="METHYLTRANSFERASE"/>
    <property type="match status" value="1"/>
</dbReference>
<dbReference type="Pfam" id="PF01209">
    <property type="entry name" value="Ubie_methyltran"/>
    <property type="match status" value="1"/>
</dbReference>
<dbReference type="SUPFAM" id="SSF53335">
    <property type="entry name" value="S-adenosyl-L-methionine-dependent methyltransferases"/>
    <property type="match status" value="1"/>
</dbReference>
<dbReference type="PROSITE" id="PS51608">
    <property type="entry name" value="SAM_MT_UBIE"/>
    <property type="match status" value="1"/>
</dbReference>
<dbReference type="PROSITE" id="PS01183">
    <property type="entry name" value="UBIE_1"/>
    <property type="match status" value="1"/>
</dbReference>
<dbReference type="PROSITE" id="PS01184">
    <property type="entry name" value="UBIE_2"/>
    <property type="match status" value="1"/>
</dbReference>
<protein>
    <recommendedName>
        <fullName evidence="1">Ubiquinone/menaquinone biosynthesis C-methyltransferase UbiE</fullName>
        <ecNumber evidence="1">2.1.1.163</ecNumber>
        <ecNumber evidence="1">2.1.1.201</ecNumber>
    </recommendedName>
    <alternativeName>
        <fullName evidence="1">2-methoxy-6-polyprenyl-1,4-benzoquinol methylase</fullName>
    </alternativeName>
    <alternativeName>
        <fullName evidence="1">Demethylmenaquinone methyltransferase</fullName>
    </alternativeName>
</protein>